<dbReference type="EMBL" id="AF017790">
    <property type="protein sequence ID" value="AAB80726.1"/>
    <property type="molecule type" value="mRNA"/>
</dbReference>
<dbReference type="EMBL" id="BC010171">
    <property type="status" value="NOT_ANNOTATED_CDS"/>
    <property type="molecule type" value="mRNA"/>
</dbReference>
<dbReference type="CCDS" id="CCDS11827.1"/>
<dbReference type="RefSeq" id="NP_006092.1">
    <property type="nucleotide sequence ID" value="NM_006101.3"/>
</dbReference>
<dbReference type="PDB" id="2IGP">
    <property type="method" value="X-ray"/>
    <property type="resolution" value="1.80 A"/>
    <property type="chains" value="A=81-196"/>
</dbReference>
<dbReference type="PDB" id="2VE7">
    <property type="method" value="X-ray"/>
    <property type="resolution" value="2.88 A"/>
    <property type="chains" value="A/B=80-286"/>
</dbReference>
<dbReference type="PDB" id="3IZ0">
    <property type="method" value="EM"/>
    <property type="chains" value="C/E=80-286"/>
</dbReference>
<dbReference type="PDB" id="8G0P">
    <property type="method" value="X-ray"/>
    <property type="resolution" value="2.00 A"/>
    <property type="chains" value="A=370-509"/>
</dbReference>
<dbReference type="PDBsum" id="2IGP"/>
<dbReference type="PDBsum" id="2VE7"/>
<dbReference type="PDBsum" id="3IZ0"/>
<dbReference type="PDBsum" id="8G0P"/>
<dbReference type="EMDB" id="EMD-2549"/>
<dbReference type="SMR" id="O14777"/>
<dbReference type="BioGRID" id="115675">
    <property type="interactions" value="333"/>
</dbReference>
<dbReference type="ComplexPortal" id="CPX-550">
    <property type="entry name" value="Ndc80 complex"/>
</dbReference>
<dbReference type="CORUM" id="O14777"/>
<dbReference type="DIP" id="DIP-35100N"/>
<dbReference type="FunCoup" id="O14777">
    <property type="interactions" value="1106"/>
</dbReference>
<dbReference type="IntAct" id="O14777">
    <property type="interactions" value="150"/>
</dbReference>
<dbReference type="MINT" id="O14777"/>
<dbReference type="STRING" id="9606.ENSP00000261597"/>
<dbReference type="ChEMBL" id="CHEMBL5660"/>
<dbReference type="GlyGen" id="O14777">
    <property type="glycosylation" value="1 site, 1 O-linked glycan (1 site)"/>
</dbReference>
<dbReference type="iPTMnet" id="O14777"/>
<dbReference type="PhosphoSitePlus" id="O14777"/>
<dbReference type="BioMuta" id="NDC80"/>
<dbReference type="jPOST" id="O14777"/>
<dbReference type="MassIVE" id="O14777"/>
<dbReference type="PaxDb" id="9606-ENSP00000261597"/>
<dbReference type="PeptideAtlas" id="O14777"/>
<dbReference type="ProteomicsDB" id="48231"/>
<dbReference type="Pumba" id="O14777"/>
<dbReference type="ABCD" id="O14777">
    <property type="antibodies" value="1 sequenced antibody"/>
</dbReference>
<dbReference type="Antibodypedia" id="6039">
    <property type="antibodies" value="458 antibodies from 39 providers"/>
</dbReference>
<dbReference type="DNASU" id="10403"/>
<dbReference type="Ensembl" id="ENST00000261597.9">
    <property type="protein sequence ID" value="ENSP00000261597.4"/>
    <property type="gene ID" value="ENSG00000080986.13"/>
</dbReference>
<dbReference type="GeneID" id="10403"/>
<dbReference type="KEGG" id="hsa:10403"/>
<dbReference type="MANE-Select" id="ENST00000261597.9">
    <property type="protein sequence ID" value="ENSP00000261597.4"/>
    <property type="RefSeq nucleotide sequence ID" value="NM_006101.3"/>
    <property type="RefSeq protein sequence ID" value="NP_006092.1"/>
</dbReference>
<dbReference type="UCSC" id="uc002kli.3">
    <property type="organism name" value="human"/>
</dbReference>
<dbReference type="AGR" id="HGNC:16909"/>
<dbReference type="CTD" id="10403"/>
<dbReference type="DisGeNET" id="10403"/>
<dbReference type="GeneCards" id="NDC80"/>
<dbReference type="HGNC" id="HGNC:16909">
    <property type="gene designation" value="NDC80"/>
</dbReference>
<dbReference type="HPA" id="ENSG00000080986">
    <property type="expression patterns" value="Tissue enhanced (bone marrow, lymphoid tissue)"/>
</dbReference>
<dbReference type="MIM" id="607272">
    <property type="type" value="gene"/>
</dbReference>
<dbReference type="neXtProt" id="NX_O14777"/>
<dbReference type="OpenTargets" id="ENSG00000080986"/>
<dbReference type="PharmGKB" id="PA162397359"/>
<dbReference type="VEuPathDB" id="HostDB:ENSG00000080986"/>
<dbReference type="eggNOG" id="KOG0995">
    <property type="taxonomic scope" value="Eukaryota"/>
</dbReference>
<dbReference type="GeneTree" id="ENSGT00390000018386"/>
<dbReference type="HOGENOM" id="CLU_012583_2_0_1"/>
<dbReference type="InParanoid" id="O14777"/>
<dbReference type="OMA" id="PSHKFQK"/>
<dbReference type="OrthoDB" id="7459479at2759"/>
<dbReference type="PAN-GO" id="O14777">
    <property type="GO annotations" value="2 GO annotations based on evolutionary models"/>
</dbReference>
<dbReference type="PhylomeDB" id="O14777"/>
<dbReference type="TreeFam" id="TF101177"/>
<dbReference type="PathwayCommons" id="O14777"/>
<dbReference type="Reactome" id="R-HSA-141444">
    <property type="pathway name" value="Amplification of signal from unattached kinetochores via a MAD2 inhibitory signal"/>
</dbReference>
<dbReference type="Reactome" id="R-HSA-2467813">
    <property type="pathway name" value="Separation of Sister Chromatids"/>
</dbReference>
<dbReference type="Reactome" id="R-HSA-2500257">
    <property type="pathway name" value="Resolution of Sister Chromatid Cohesion"/>
</dbReference>
<dbReference type="Reactome" id="R-HSA-5663220">
    <property type="pathway name" value="RHO GTPases Activate Formins"/>
</dbReference>
<dbReference type="Reactome" id="R-HSA-68877">
    <property type="pathway name" value="Mitotic Prometaphase"/>
</dbReference>
<dbReference type="Reactome" id="R-HSA-9648025">
    <property type="pathway name" value="EML4 and NUDC in mitotic spindle formation"/>
</dbReference>
<dbReference type="SignaLink" id="O14777"/>
<dbReference type="SIGNOR" id="O14777"/>
<dbReference type="BioGRID-ORCS" id="10403">
    <property type="hits" value="793 hits in 1162 CRISPR screens"/>
</dbReference>
<dbReference type="CD-CODE" id="8C2F96ED">
    <property type="entry name" value="Centrosome"/>
</dbReference>
<dbReference type="ChiTaRS" id="NDC80">
    <property type="organism name" value="human"/>
</dbReference>
<dbReference type="EvolutionaryTrace" id="O14777"/>
<dbReference type="GeneWiki" id="NDC80"/>
<dbReference type="GenomeRNAi" id="10403"/>
<dbReference type="Pharos" id="O14777">
    <property type="development level" value="Tbio"/>
</dbReference>
<dbReference type="PRO" id="PR:O14777"/>
<dbReference type="Proteomes" id="UP000005640">
    <property type="component" value="Chromosome 18"/>
</dbReference>
<dbReference type="RNAct" id="O14777">
    <property type="molecule type" value="protein"/>
</dbReference>
<dbReference type="Bgee" id="ENSG00000080986">
    <property type="expression patterns" value="Expressed in ventricular zone and 137 other cell types or tissues"/>
</dbReference>
<dbReference type="ExpressionAtlas" id="O14777">
    <property type="expression patterns" value="baseline and differential"/>
</dbReference>
<dbReference type="GO" id="GO:0005813">
    <property type="term" value="C:centrosome"/>
    <property type="evidence" value="ECO:0000314"/>
    <property type="project" value="HPA"/>
</dbReference>
<dbReference type="GO" id="GO:0000775">
    <property type="term" value="C:chromosome, centromeric region"/>
    <property type="evidence" value="ECO:0000304"/>
    <property type="project" value="ProtInc"/>
</dbReference>
<dbReference type="GO" id="GO:0005829">
    <property type="term" value="C:cytosol"/>
    <property type="evidence" value="ECO:0000314"/>
    <property type="project" value="HPA"/>
</dbReference>
<dbReference type="GO" id="GO:0000776">
    <property type="term" value="C:kinetochore"/>
    <property type="evidence" value="ECO:0000314"/>
    <property type="project" value="UniProtKB"/>
</dbReference>
<dbReference type="GO" id="GO:0016020">
    <property type="term" value="C:membrane"/>
    <property type="evidence" value="ECO:0007005"/>
    <property type="project" value="UniProtKB"/>
</dbReference>
<dbReference type="GO" id="GO:0031262">
    <property type="term" value="C:Ndc80 complex"/>
    <property type="evidence" value="ECO:0000314"/>
    <property type="project" value="UniProtKB"/>
</dbReference>
<dbReference type="GO" id="GO:0016607">
    <property type="term" value="C:nuclear speck"/>
    <property type="evidence" value="ECO:0000314"/>
    <property type="project" value="HPA"/>
</dbReference>
<dbReference type="GO" id="GO:0005654">
    <property type="term" value="C:nucleoplasm"/>
    <property type="evidence" value="ECO:0000314"/>
    <property type="project" value="HPA"/>
</dbReference>
<dbReference type="GO" id="GO:0005634">
    <property type="term" value="C:nucleus"/>
    <property type="evidence" value="ECO:0000304"/>
    <property type="project" value="ProtInc"/>
</dbReference>
<dbReference type="GO" id="GO:0000940">
    <property type="term" value="C:outer kinetochore"/>
    <property type="evidence" value="ECO:0000314"/>
    <property type="project" value="UniProtKB"/>
</dbReference>
<dbReference type="GO" id="GO:0030332">
    <property type="term" value="F:cyclin binding"/>
    <property type="evidence" value="ECO:0007669"/>
    <property type="project" value="Ensembl"/>
</dbReference>
<dbReference type="GO" id="GO:0042802">
    <property type="term" value="F:identical protein binding"/>
    <property type="evidence" value="ECO:0000353"/>
    <property type="project" value="IntAct"/>
</dbReference>
<dbReference type="GO" id="GO:0140483">
    <property type="term" value="F:kinetochore adaptor activity"/>
    <property type="evidence" value="ECO:0000314"/>
    <property type="project" value="UniProtKB"/>
</dbReference>
<dbReference type="GO" id="GO:0008017">
    <property type="term" value="F:microtubule binding"/>
    <property type="evidence" value="ECO:0000315"/>
    <property type="project" value="UniProtKB"/>
</dbReference>
<dbReference type="GO" id="GO:0051315">
    <property type="term" value="P:attachment of mitotic spindle microtubules to kinetochore"/>
    <property type="evidence" value="ECO:0000314"/>
    <property type="project" value="UniProtKB"/>
</dbReference>
<dbReference type="GO" id="GO:0008608">
    <property type="term" value="P:attachment of spindle microtubules to kinetochore"/>
    <property type="evidence" value="ECO:0000314"/>
    <property type="project" value="ComplexPortal"/>
</dbReference>
<dbReference type="GO" id="GO:0051301">
    <property type="term" value="P:cell division"/>
    <property type="evidence" value="ECO:0007669"/>
    <property type="project" value="UniProtKB-KW"/>
</dbReference>
<dbReference type="GO" id="GO:0051298">
    <property type="term" value="P:centrosome duplication"/>
    <property type="evidence" value="ECO:0000314"/>
    <property type="project" value="MGI"/>
</dbReference>
<dbReference type="GO" id="GO:0007059">
    <property type="term" value="P:chromosome segregation"/>
    <property type="evidence" value="ECO:0000315"/>
    <property type="project" value="UniProtKB"/>
</dbReference>
<dbReference type="GO" id="GO:0000132">
    <property type="term" value="P:establishment of mitotic spindle orientation"/>
    <property type="evidence" value="ECO:0000315"/>
    <property type="project" value="UniProtKB"/>
</dbReference>
<dbReference type="GO" id="GO:0008315">
    <property type="term" value="P:G2/MI transition of meiotic cell cycle"/>
    <property type="evidence" value="ECO:0007669"/>
    <property type="project" value="Ensembl"/>
</dbReference>
<dbReference type="GO" id="GO:0051383">
    <property type="term" value="P:kinetochore organization"/>
    <property type="evidence" value="ECO:0007669"/>
    <property type="project" value="Ensembl"/>
</dbReference>
<dbReference type="GO" id="GO:0051310">
    <property type="term" value="P:metaphase chromosome alignment"/>
    <property type="evidence" value="ECO:0000314"/>
    <property type="project" value="MGI"/>
</dbReference>
<dbReference type="GO" id="GO:0000278">
    <property type="term" value="P:mitotic cell cycle"/>
    <property type="evidence" value="ECO:0000304"/>
    <property type="project" value="ProtInc"/>
</dbReference>
<dbReference type="GO" id="GO:0000070">
    <property type="term" value="P:mitotic sister chromatid segregation"/>
    <property type="evidence" value="ECO:0000304"/>
    <property type="project" value="ProtInc"/>
</dbReference>
<dbReference type="GO" id="GO:0007094">
    <property type="term" value="P:mitotic spindle assembly checkpoint signaling"/>
    <property type="evidence" value="ECO:0000303"/>
    <property type="project" value="ComplexPortal"/>
</dbReference>
<dbReference type="GO" id="GO:0007052">
    <property type="term" value="P:mitotic spindle organization"/>
    <property type="evidence" value="ECO:0000315"/>
    <property type="project" value="UniProtKB"/>
</dbReference>
<dbReference type="GO" id="GO:0090267">
    <property type="term" value="P:positive regulation of mitotic cell cycle spindle assembly checkpoint"/>
    <property type="evidence" value="ECO:0000315"/>
    <property type="project" value="UniProtKB"/>
</dbReference>
<dbReference type="GO" id="GO:0031647">
    <property type="term" value="P:regulation of protein stability"/>
    <property type="evidence" value="ECO:0007669"/>
    <property type="project" value="Ensembl"/>
</dbReference>
<dbReference type="GO" id="GO:0014841">
    <property type="term" value="P:skeletal muscle satellite cell proliferation"/>
    <property type="evidence" value="ECO:0007669"/>
    <property type="project" value="Ensembl"/>
</dbReference>
<dbReference type="GO" id="GO:0007057">
    <property type="term" value="P:spindle assembly involved in female meiosis I"/>
    <property type="evidence" value="ECO:0007669"/>
    <property type="project" value="Ensembl"/>
</dbReference>
<dbReference type="FunFam" id="1.10.418.30:FF:000002">
    <property type="entry name" value="NDC80, kinetochore complex component"/>
    <property type="match status" value="1"/>
</dbReference>
<dbReference type="Gene3D" id="6.10.250.1950">
    <property type="match status" value="1"/>
</dbReference>
<dbReference type="Gene3D" id="1.10.418.30">
    <property type="entry name" value="Ncd80 complex, Ncd80 subunit"/>
    <property type="match status" value="1"/>
</dbReference>
<dbReference type="IDEAL" id="IID00184"/>
<dbReference type="InterPro" id="IPR040967">
    <property type="entry name" value="DUF5595"/>
</dbReference>
<dbReference type="InterPro" id="IPR005550">
    <property type="entry name" value="Kinetochore_Ndc80"/>
</dbReference>
<dbReference type="InterPro" id="IPR055260">
    <property type="entry name" value="Ndc80_CH"/>
</dbReference>
<dbReference type="InterPro" id="IPR038273">
    <property type="entry name" value="Ndc80_sf"/>
</dbReference>
<dbReference type="PANTHER" id="PTHR10643">
    <property type="entry name" value="KINETOCHORE PROTEIN NDC80"/>
    <property type="match status" value="1"/>
</dbReference>
<dbReference type="PANTHER" id="PTHR10643:SF2">
    <property type="entry name" value="KINETOCHORE PROTEIN NDC80 HOMOLOG"/>
    <property type="match status" value="1"/>
</dbReference>
<dbReference type="Pfam" id="PF18077">
    <property type="entry name" value="DUF5595"/>
    <property type="match status" value="1"/>
</dbReference>
<dbReference type="Pfam" id="PF03801">
    <property type="entry name" value="Ndc80_HEC"/>
    <property type="match status" value="1"/>
</dbReference>
<dbReference type="Pfam" id="PF24487">
    <property type="entry name" value="NDC80_loop"/>
    <property type="match status" value="1"/>
</dbReference>
<gene>
    <name type="primary">NDC80</name>
    <name type="synonym">HEC</name>
    <name type="synonym">HEC1</name>
    <name type="synonym">KNTC2</name>
</gene>
<protein>
    <recommendedName>
        <fullName>Kinetochore protein NDC80 homolog</fullName>
    </recommendedName>
    <alternativeName>
        <fullName>Highly expressed in cancer protein</fullName>
    </alternativeName>
    <alternativeName>
        <fullName>Kinetochore protein Hec1</fullName>
        <shortName>HsHec1</shortName>
    </alternativeName>
    <alternativeName>
        <fullName>Kinetochore-associated protein 2</fullName>
    </alternativeName>
    <alternativeName>
        <fullName>Retinoblastoma-associated protein HEC</fullName>
    </alternativeName>
</protein>
<comment type="function">
    <text evidence="6 9 10 11 12 13 15 18 20 21 22 24 26">Acts as a component of the essential kinetochore-associated NDC80 complex, which is required for chromosome segregation and spindle checkpoint activity (PubMed:12351790, PubMed:14654001, PubMed:14699129, PubMed:15062103, PubMed:15235793, PubMed:15239953, PubMed:15548592, PubMed:16732327, PubMed:30409912, PubMed:9315664). Required for kinetochore integrity and the organization of stable microtubule binding sites in the outer plate of the kinetochore (PubMed:15548592, PubMed:30409912). The NDC80 complex synergistically enhances the affinity of the SKA1 complex for microtubules and may allow the NDC80 complex to track depolymerizing microtubules (PubMed:23085020). Plays a role in chromosome congression and is essential for the end-on attachment of the kinetochores to spindle microtubules (PubMed:23891108, PubMed:25743205).</text>
</comment>
<comment type="subunit">
    <text evidence="4 5 7 8 10 14 16 17 18 19 23 25">Component of the NDC80 complex, which consists of NDC80/HEC1, CDCA1, SPBC24 and SPBC25. The NDC80 complex is formed by two subcomplexes composed of NDC80/HEC1-CDCA1 and SPBC24-SPBC25. Each subcomplex is formed by parallel interactions through the coiled-coil domains of individual subunits. Formation of a tetrameric complex is mediated by interactions between the C-terminal regions of both subunits of the NDC80/HEC1-CDCA1 subcomplex and the N-terminal regions of both subunits of the SPBC24-SPBC25 complex. The tetrameric NDC80 complex has an elongated rod-like structure with globular domains at either end. Interacts with isoform 1 of NEK2 and ZWINT specifically during mitosis. Interacts with CENPH and MIS12. May interact with AURKB, PSMC2, PSMC5 and SMC1A. May interact with RB1 during G2 phase and mitosis. Interacts with CKAP5 (PubMed:27156448). Interacts with CDT1; leading to kinetochore localization of CDT1 (PubMed:22581055).</text>
</comment>
<comment type="interaction">
    <interactant intactId="EBI-715849">
        <id>O14777</id>
    </interactant>
    <interactant intactId="EBI-746752">
        <id>Q9Y2J4</id>
        <label>AMOTL2</label>
    </interactant>
    <organismsDiffer>false</organismsDiffer>
    <experiments>3</experiments>
</comment>
<comment type="interaction">
    <interactant intactId="EBI-715849">
        <id>O14777</id>
    </interactant>
    <interactant intactId="EBI-492498">
        <id>P18848</id>
        <label>ATF4</label>
    </interactant>
    <organismsDiffer>false</organismsDiffer>
    <experiments>8</experiments>
</comment>
<comment type="interaction">
    <interactant intactId="EBI-715849">
        <id>O14777</id>
    </interactant>
    <interactant intactId="EBI-355815">
        <id>P48047</id>
        <label>ATP5PO</label>
    </interactant>
    <organismsDiffer>false</organismsDiffer>
    <experiments>3</experiments>
</comment>
<comment type="interaction">
    <interactant intactId="EBI-715849">
        <id>O14777</id>
    </interactant>
    <interactant intactId="EBI-2684998">
        <id>Q9Y5K8</id>
        <label>ATP6V1D</label>
    </interactant>
    <organismsDiffer>false</organismsDiffer>
    <experiments>3</experiments>
</comment>
<comment type="interaction">
    <interactant intactId="EBI-715849">
        <id>O14777</id>
    </interactant>
    <interactant intactId="EBI-11522698">
        <id>Q8TC20-4</id>
        <label>CAGE1</label>
    </interactant>
    <organismsDiffer>false</organismsDiffer>
    <experiments>3</experiments>
</comment>
<comment type="interaction">
    <interactant intactId="EBI-715849">
        <id>O14777</id>
    </interactant>
    <interactant intactId="EBI-749920">
        <id>Q9P1Z2</id>
        <label>CALCOCO1</label>
    </interactant>
    <organismsDiffer>false</organismsDiffer>
    <experiments>5</experiments>
</comment>
<comment type="interaction">
    <interactant intactId="EBI-715849">
        <id>O14777</id>
    </interactant>
    <interactant intactId="EBI-10175300">
        <id>Q8TD31-3</id>
        <label>CCHCR1</label>
    </interactant>
    <organismsDiffer>false</organismsDiffer>
    <experiments>6</experiments>
</comment>
<comment type="interaction">
    <interactant intactId="EBI-715849">
        <id>O14777</id>
    </interactant>
    <interactant intactId="EBI-741406">
        <id>P51946</id>
        <label>CCNH</label>
    </interactant>
    <organismsDiffer>false</organismsDiffer>
    <experiments>3</experiments>
</comment>
<comment type="interaction">
    <interactant intactId="EBI-715849">
        <id>O14777</id>
    </interactant>
    <interactant intactId="EBI-739806">
        <id>O75909</id>
        <label>CCNK</label>
    </interactant>
    <organismsDiffer>false</organismsDiffer>
    <experiments>3</experiments>
</comment>
<comment type="interaction">
    <interactant intactId="EBI-715849">
        <id>O14777</id>
    </interactant>
    <interactant intactId="EBI-456953">
        <id>Q9H211</id>
        <label>CDT1</label>
    </interactant>
    <organismsDiffer>false</organismsDiffer>
    <experiments>7</experiments>
</comment>
<comment type="interaction">
    <interactant intactId="EBI-715849">
        <id>O14777</id>
    </interactant>
    <interactant intactId="EBI-1003700">
        <id>Q9H3R5</id>
        <label>CENPH</label>
    </interactant>
    <organismsDiffer>false</organismsDiffer>
    <experiments>8</experiments>
</comment>
<comment type="interaction">
    <interactant intactId="EBI-715849">
        <id>O14777</id>
    </interactant>
    <interactant intactId="EBI-11522539">
        <id>Q96MT8-3</id>
        <label>CEP63</label>
    </interactant>
    <organismsDiffer>false</organismsDiffer>
    <experiments>3</experiments>
</comment>
<comment type="interaction">
    <interactant intactId="EBI-715849">
        <id>O14777</id>
    </interactant>
    <interactant intactId="EBI-11958621">
        <id>Q9UBC2-3</id>
        <label>EPS15L1</label>
    </interactant>
    <organismsDiffer>false</organismsDiffer>
    <experiments>3</experiments>
</comment>
<comment type="interaction">
    <interactant intactId="EBI-715849">
        <id>O14777</id>
    </interactant>
    <interactant intactId="EBI-742102">
        <id>Q8IYI6</id>
        <label>EXOC8</label>
    </interactant>
    <organismsDiffer>false</organismsDiffer>
    <experiments>3</experiments>
</comment>
<comment type="interaction">
    <interactant intactId="EBI-715849">
        <id>O14777</id>
    </interactant>
    <interactant intactId="EBI-2870039">
        <id>Q8IZT9</id>
        <label>FAM9C</label>
    </interactant>
    <organismsDiffer>false</organismsDiffer>
    <experiments>4</experiments>
</comment>
<comment type="interaction">
    <interactant intactId="EBI-715849">
        <id>O14777</id>
    </interactant>
    <interactant intactId="EBI-618309">
        <id>Q08379</id>
        <label>GOLGA2</label>
    </interactant>
    <organismsDiffer>false</organismsDiffer>
    <experiments>3</experiments>
</comment>
<comment type="interaction">
    <interactant intactId="EBI-715849">
        <id>O14777</id>
    </interactant>
    <interactant intactId="EBI-2514791">
        <id>Q96CS2</id>
        <label>HAUS1</label>
    </interactant>
    <organismsDiffer>false</organismsDiffer>
    <experiments>3</experiments>
</comment>
<comment type="interaction">
    <interactant intactId="EBI-715849">
        <id>O14777</id>
    </interactant>
    <interactant intactId="EBI-740220">
        <id>O14964</id>
        <label>HGS</label>
    </interactant>
    <organismsDiffer>false</organismsDiffer>
    <experiments>6</experiments>
</comment>
<comment type="interaction">
    <interactant intactId="EBI-715849">
        <id>O14777</id>
    </interactant>
    <interactant intactId="EBI-12292427">
        <id>O75146-2</id>
        <label>HIP1R</label>
    </interactant>
    <organismsDiffer>false</organismsDiffer>
    <experiments>3</experiments>
</comment>
<comment type="interaction">
    <interactant intactId="EBI-715849">
        <id>O14777</id>
    </interactant>
    <interactant intactId="EBI-744203">
        <id>Q8IY31</id>
        <label>IFT20</label>
    </interactant>
    <organismsDiffer>false</organismsDiffer>
    <experiments>5</experiments>
</comment>
<comment type="interaction">
    <interactant intactId="EBI-715849">
        <id>O14777</id>
    </interactant>
    <interactant intactId="EBI-14069005">
        <id>Q9BVG8-5</id>
        <label>KIFC3</label>
    </interactant>
    <organismsDiffer>false</organismsDiffer>
    <experiments>3</experiments>
</comment>
<comment type="interaction">
    <interactant intactId="EBI-715849">
        <id>O14777</id>
    </interactant>
    <interactant intactId="EBI-1643885">
        <id>Q6P597</id>
        <label>KLC3</label>
    </interactant>
    <organismsDiffer>false</organismsDiffer>
    <experiments>3</experiments>
</comment>
<comment type="interaction">
    <interactant intactId="EBI-715849">
        <id>O14777</id>
    </interactant>
    <interactant intactId="EBI-3044087">
        <id>Q7Z3Y8</id>
        <label>KRT27</label>
    </interactant>
    <organismsDiffer>false</organismsDiffer>
    <experiments>3</experiments>
</comment>
<comment type="interaction">
    <interactant intactId="EBI-715849">
        <id>O14777</id>
    </interactant>
    <interactant intactId="EBI-740907">
        <id>P04259</id>
        <label>KRT6B</label>
    </interactant>
    <organismsDiffer>false</organismsDiffer>
    <experiments>3</experiments>
</comment>
<comment type="interaction">
    <interactant intactId="EBI-715849">
        <id>O14777</id>
    </interactant>
    <interactant intactId="EBI-2949715">
        <id>O95678</id>
        <label>KRT75</label>
    </interactant>
    <organismsDiffer>false</organismsDiffer>
    <experiments>3</experiments>
</comment>
<comment type="interaction">
    <interactant intactId="EBI-715849">
        <id>O14777</id>
    </interactant>
    <interactant intactId="EBI-739832">
        <id>Q8TBB1</id>
        <label>LNX1</label>
    </interactant>
    <organismsDiffer>false</organismsDiffer>
    <experiments>3</experiments>
</comment>
<comment type="interaction">
    <interactant intactId="EBI-715849">
        <id>O14777</id>
    </interactant>
    <interactant intactId="EBI-394607">
        <id>Q9NPJ6</id>
        <label>MED4</label>
    </interactant>
    <organismsDiffer>false</organismsDiffer>
    <experiments>4</experiments>
</comment>
<comment type="interaction">
    <interactant intactId="EBI-715849">
        <id>O14777</id>
    </interactant>
    <interactant intactId="EBI-1048159">
        <id>P55081</id>
        <label>MFAP1</label>
    </interactant>
    <organismsDiffer>false</organismsDiffer>
    <experiments>3</experiments>
</comment>
<comment type="interaction">
    <interactant intactId="EBI-715849">
        <id>O14777</id>
    </interactant>
    <interactant intactId="EBI-715849">
        <id>O14777</id>
        <label>NDC80</label>
    </interactant>
    <organismsDiffer>false</organismsDiffer>
    <experiments>2</experiments>
</comment>
<comment type="interaction">
    <interactant intactId="EBI-715849">
        <id>O14777</id>
    </interactant>
    <interactant intactId="EBI-928842">
        <id>Q9GZM8</id>
        <label>NDEL1</label>
    </interactant>
    <organismsDiffer>false</organismsDiffer>
    <experiments>4</experiments>
</comment>
<comment type="interaction">
    <interactant intactId="EBI-715849">
        <id>O14777</id>
    </interactant>
    <interactant intactId="EBI-724102">
        <id>Q9BZD4</id>
        <label>NUF2</label>
    </interactant>
    <organismsDiffer>false</organismsDiffer>
    <experiments>16</experiments>
</comment>
<comment type="interaction">
    <interactant intactId="EBI-715849">
        <id>O14777</id>
    </interactant>
    <interactant intactId="EBI-1105153">
        <id>Q96KQ4</id>
        <label>PPP1R13B</label>
    </interactant>
    <organismsDiffer>false</organismsDiffer>
    <experiments>3</experiments>
</comment>
<comment type="interaction">
    <interactant intactId="EBI-715849">
        <id>O14777</id>
    </interactant>
    <interactant intactId="EBI-10181525">
        <id>Q6ZNE9</id>
        <label>RUFY4</label>
    </interactant>
    <organismsDiffer>false</organismsDiffer>
    <experiments>8</experiments>
</comment>
<comment type="interaction">
    <interactant intactId="EBI-715849">
        <id>O14777</id>
    </interactant>
    <interactant intactId="EBI-1104535">
        <id>Q86XK3</id>
        <label>SFR1</label>
    </interactant>
    <organismsDiffer>false</organismsDiffer>
    <experiments>3</experiments>
</comment>
<comment type="interaction">
    <interactant intactId="EBI-715849">
        <id>O14777</id>
    </interactant>
    <interactant intactId="EBI-743117">
        <id>Q96ES7</id>
        <label>SGF29</label>
    </interactant>
    <organismsDiffer>false</organismsDiffer>
    <experiments>8</experiments>
</comment>
<comment type="interaction">
    <interactant intactId="EBI-715849">
        <id>O14777</id>
    </interactant>
    <interactant intactId="EBI-999909">
        <id>Q9HBM1</id>
        <label>SPC25</label>
    </interactant>
    <organismsDiffer>false</organismsDiffer>
    <experiments>15</experiments>
</comment>
<comment type="interaction">
    <interactant intactId="EBI-715849">
        <id>O14777</id>
    </interactant>
    <interactant intactId="EBI-714135">
        <id>O75558</id>
        <label>STX11</label>
    </interactant>
    <organismsDiffer>false</organismsDiffer>
    <experiments>3</experiments>
</comment>
<comment type="interaction">
    <interactant intactId="EBI-715849">
        <id>O14777</id>
    </interactant>
    <interactant intactId="EBI-1105213">
        <id>Q9UBB9</id>
        <label>TFIP11</label>
    </interactant>
    <organismsDiffer>false</organismsDiffer>
    <experiments>6</experiments>
</comment>
<comment type="interaction">
    <interactant intactId="EBI-715849">
        <id>O14777</id>
    </interactant>
    <interactant intactId="EBI-716286">
        <id>Q6I9Y2</id>
        <label>THOC7</label>
    </interactant>
    <organismsDiffer>false</organismsDiffer>
    <experiments>3</experiments>
</comment>
<comment type="interaction">
    <interactant intactId="EBI-715849">
        <id>O14777</id>
    </interactant>
    <interactant intactId="EBI-357849">
        <id>Q15025</id>
        <label>TNIP1</label>
    </interactant>
    <organismsDiffer>false</organismsDiffer>
    <experiments>9</experiments>
</comment>
<comment type="interaction">
    <interactant intactId="EBI-715849">
        <id>O14777</id>
    </interactant>
    <interactant intactId="EBI-11952721">
        <id>Q05BL1</id>
        <label>TP53BP2</label>
    </interactant>
    <organismsDiffer>false</organismsDiffer>
    <experiments>3</experiments>
</comment>
<comment type="interaction">
    <interactant intactId="EBI-715849">
        <id>O14777</id>
    </interactant>
    <interactant intactId="EBI-10175039">
        <id>Q13625-3</id>
        <label>TP53BP2</label>
    </interactant>
    <organismsDiffer>false</organismsDiffer>
    <experiments>3</experiments>
</comment>
<comment type="interaction">
    <interactant intactId="EBI-715849">
        <id>O14777</id>
    </interactant>
    <interactant intactId="EBI-15986834">
        <id>P33981-1</id>
        <label>TTK</label>
    </interactant>
    <organismsDiffer>false</organismsDiffer>
    <experiments>4</experiments>
</comment>
<comment type="interaction">
    <interactant intactId="EBI-715849">
        <id>O14777</id>
    </interactant>
    <interactant intactId="EBI-359793">
        <id>P40222</id>
        <label>TXLNA</label>
    </interactant>
    <organismsDiffer>false</organismsDiffer>
    <experiments>7</experiments>
</comment>
<comment type="interaction">
    <interactant intactId="EBI-715849">
        <id>O14777</id>
    </interactant>
    <interactant intactId="EBI-739895">
        <id>Q8N6Y0</id>
        <label>USHBP1</label>
    </interactant>
    <organismsDiffer>false</organismsDiffer>
    <experiments>4</experiments>
</comment>
<comment type="interaction">
    <interactant intactId="EBI-715849">
        <id>O14777</id>
    </interactant>
    <interactant intactId="EBI-2799833">
        <id>Q8N1B4</id>
        <label>VPS52</label>
    </interactant>
    <organismsDiffer>false</organismsDiffer>
    <experiments>3</experiments>
</comment>
<comment type="interaction">
    <interactant intactId="EBI-715849">
        <id>O14777</id>
    </interactant>
    <interactant intactId="EBI-712969">
        <id>Q9Y3C0</id>
        <label>WASHC3</label>
    </interactant>
    <organismsDiffer>false</organismsDiffer>
    <experiments>10</experiments>
</comment>
<comment type="interaction">
    <interactant intactId="EBI-715849">
        <id>O14777</id>
    </interactant>
    <interactant intactId="EBI-625509">
        <id>Q8N720</id>
        <label>ZNF655</label>
    </interactant>
    <organismsDiffer>false</organismsDiffer>
    <experiments>3</experiments>
</comment>
<comment type="interaction">
    <interactant intactId="EBI-715849">
        <id>O14777</id>
    </interactant>
    <interactant intactId="EBI-1001132">
        <id>O95229</id>
        <label>ZWINT</label>
    </interactant>
    <organismsDiffer>false</organismsDiffer>
    <experiments>16</experiments>
</comment>
<comment type="subcellular location">
    <subcellularLocation>
        <location evidence="26">Nucleus</location>
    </subcellularLocation>
    <subcellularLocation>
        <location evidence="10">Chromosome</location>
        <location evidence="10">Centromere</location>
        <location evidence="10">Kinetochore</location>
    </subcellularLocation>
    <text evidence="10">Localizes to kinetochores from late prophase to anaphase (PubMed:14699129). Localizes specifically to the outer plate of the kinetochore (PubMed:14699129).</text>
</comment>
<comment type="developmental stage">
    <text evidence="18 25 26">Expression peaks in mitosis.</text>
</comment>
<comment type="PTM">
    <text evidence="7 8 24">Phosphorylation begins in S phase of the cell cycle and peaks in mitosis. Phosphorylated by NEK2. Also phosphorylated by AURKA and AURKB.</text>
</comment>
<comment type="PTM">
    <text evidence="24">Acetylated at Lys-53 and Lys-59 by KAT5 during mitosis, promoting robust kinetochore-microtubule attachment (PubMed:30409912). Deacetylated by SIRT1 (PubMed:30409912).</text>
</comment>
<comment type="similarity">
    <text evidence="27">Belongs to the NDC80/HEC1 family.</text>
</comment>
<keyword id="KW-0002">3D-structure</keyword>
<keyword id="KW-0007">Acetylation</keyword>
<keyword id="KW-0131">Cell cycle</keyword>
<keyword id="KW-0132">Cell division</keyword>
<keyword id="KW-0137">Centromere</keyword>
<keyword id="KW-0158">Chromosome</keyword>
<keyword id="KW-0175">Coiled coil</keyword>
<keyword id="KW-0995">Kinetochore</keyword>
<keyword id="KW-0498">Mitosis</keyword>
<keyword id="KW-0539">Nucleus</keyword>
<keyword id="KW-0597">Phosphoprotein</keyword>
<keyword id="KW-1267">Proteomics identification</keyword>
<keyword id="KW-1185">Reference proteome</keyword>
<sequence>MKRSSVSSGGAGRLSMQELRSQDVNKQGLYTPQTKEKPTFGKLSINKPTSERKVSLFGKRTSGHGSRNSQLGIFSSSEKIKDPRPLNDKAFIQQCIRQLCEFLTENGYAHNVSMKSLQAPSVKDFLKIFTFLYGFLCPSYELPDTKFEEEVPRIFKDLGYPFALSKSSMYTVGAPHTWPHIVAALVWLIDCIKIHTAMKESSPLFDDGQPWGEETEDGIMHNKLFLDYTIKCYESFMSGADSFDEMNAELQSKLKDLFNVDAFKLESLEAKNRALNEQIARLEQEREKEPNRLESLRKLKASLQGDVQKYQAYMSNLESHSAILDQKLNGLNEEIARVELECETIKQENTRLQNIIDNQKYSVADIERINHERNELQQTINKLTKDLEAEQQKLWNEELKYARGKEAIETQLAEYHKLARKLKLIPKGAENSKGYDFEIKFNPEAGANCLVKYRAQVYVPLKELLNETEEEINKALNKKMGLEDTLEQLNAMITESKRSVRTLKEEVQKLDDLYQQKIKEAEEEDEKCASELESLEKHKHLLESTVNQGLSEAMNELDAVQREYQLVVQTTTEERRKVGNNLQRLLEMVATHVGSVEKHLEEQIAKVDREYEECMSEDLSENIKEIRDKYEKKATLIKSSEE</sequence>
<reference key="1">
    <citation type="journal article" date="1997" name="Mol. Cell. Biol.">
        <title>HEC, a novel nuclear protein rich in leucine heptad repeats specifically involved in mitosis.</title>
        <authorList>
            <person name="Chen Y."/>
            <person name="Riley D.J."/>
            <person name="Chen P.-L."/>
            <person name="Lee W.-H."/>
        </authorList>
    </citation>
    <scope>NUCLEOTIDE SEQUENCE [MRNA]</scope>
    <scope>FUNCTION</scope>
    <scope>SUBCELLULAR LOCATION</scope>
    <scope>DEVELOPMENTAL STAGE</scope>
</reference>
<reference key="2">
    <citation type="journal article" date="2004" name="Genome Res.">
        <title>The status, quality, and expansion of the NIH full-length cDNA project: the Mammalian Gene Collection (MGC).</title>
        <authorList>
            <consortium name="The MGC Project Team"/>
        </authorList>
    </citation>
    <scope>NUCLEOTIDE SEQUENCE [LARGE SCALE MRNA]</scope>
    <source>
        <tissue>Brain</tissue>
        <tissue>Lymph</tissue>
    </source>
</reference>
<reference key="3">
    <citation type="journal article" date="1997" name="J. Biol. Chem.">
        <title>HEC binds to the seventh regulatory subunit of the 26 S proteasome and modulates the proteolysis of mitotic cyclins.</title>
        <authorList>
            <person name="Chen Y."/>
            <person name="Sharp Z.D."/>
            <person name="Lee W.-H."/>
        </authorList>
    </citation>
    <scope>INTERACTION WITH NEK2; PSMC2; PSMC5 AND SMC1A</scope>
    <scope>SUBCELLULAR LOCATION</scope>
    <scope>DEVELOPMENTAL STAGE</scope>
</reference>
<reference key="4">
    <citation type="journal article" date="1999" name="Mol. Cell. Biol.">
        <title>Hec1p, an evolutionarily conserved coiled-coil protein, modulates chromosome segregation through interaction with SMC proteins.</title>
        <authorList>
            <person name="Zheng L."/>
            <person name="Chen Y."/>
            <person name="Lee W.-H."/>
        </authorList>
    </citation>
    <scope>INTERACTION WITH NEK2; PSMC2; PSMC5; RB1 AND SMC1A</scope>
</reference>
<reference key="5">
    <citation type="journal article" date="2000" name="Mol. Cell. Biol.">
        <title>Retinoblastoma protein enhances the fidelity of chromosome segregation mediated by hsHec1p.</title>
        <authorList>
            <person name="Zheng L."/>
            <person name="Chen Y."/>
            <person name="Riley D.J."/>
            <person name="Chen P.-L."/>
            <person name="Lee W.-H."/>
        </authorList>
    </citation>
    <scope>INTERACTION WITH RB1 AND SMC1A</scope>
    <scope>MUTAGENESIS OF GLU-234</scope>
</reference>
<reference key="6">
    <citation type="journal article" date="2002" name="J. Biol. Chem.">
        <title>Phosphorylation of the mitotic regulator protein Hec1 by Nek2 kinase is essential for faithful chromosome segregation.</title>
        <authorList>
            <person name="Chen Y."/>
            <person name="Riley D.J."/>
            <person name="Zheng L."/>
            <person name="Chen P.-L."/>
            <person name="Lee W.-H."/>
        </authorList>
    </citation>
    <scope>INTERACTION WITH NEK2</scope>
    <scope>PHOSPHORYLATION AT SER-165 BY NEK2</scope>
</reference>
<reference key="7">
    <citation type="journal article" date="2002" name="Science">
        <title>Role of Hec1 in spindle checkpoint signaling and kinetochore recruitment of Mad1/Mad2.</title>
        <authorList>
            <person name="Martin-Lluesma S."/>
            <person name="Stucke V.M."/>
            <person name="Nigg E.A."/>
        </authorList>
    </citation>
    <scope>FUNCTION</scope>
    <scope>SUBCELLULAR LOCATION</scope>
</reference>
<reference key="8">
    <citation type="journal article" date="2003" name="Curr. Biol.">
        <title>Nuf2 and Hec1 are required for retention of the checkpoint proteins Mad1 and Mad2 to kinetochores.</title>
        <authorList>
            <person name="DeLuca J.G."/>
            <person name="Howell B.J."/>
            <person name="Canman J.C."/>
            <person name="Hickey J.M."/>
            <person name="Fang G."/>
            <person name="Salmon E.D."/>
        </authorList>
    </citation>
    <scope>FUNCTION</scope>
    <scope>SUBCELLULAR LOCATION</scope>
</reference>
<reference key="9">
    <citation type="journal article" date="2004" name="Chromosoma">
        <title>Kinetochore localization and microtubule interaction of the human spindle checkpoint kinase Mps1.</title>
        <authorList>
            <person name="Stucke V.M."/>
            <person name="Baumann C."/>
            <person name="Nigg E.A."/>
        </authorList>
    </citation>
    <scope>FUNCTION</scope>
</reference>
<reference key="10">
    <citation type="journal article" date="2004" name="Curr. Biol.">
        <title>The RanGAP1-RanBP2 complex is essential for microtubule-kinetochore interactions in vivo.</title>
        <authorList>
            <person name="Joseph J."/>
            <person name="Liu S.-T."/>
            <person name="Jablonski S.A."/>
            <person name="Yen T.J."/>
            <person name="Dasso M."/>
        </authorList>
    </citation>
    <scope>FUNCTION</scope>
</reference>
<reference key="11">
    <citation type="journal article" date="2004" name="Dev. Cell">
        <title>Timing and checkpoints in the regulation of mitotic progression.</title>
        <authorList>
            <person name="Meraldi P."/>
            <person name="Draviam V.M."/>
            <person name="Sorger P.K."/>
        </authorList>
    </citation>
    <scope>FUNCTION</scope>
</reference>
<reference key="12">
    <citation type="journal article" date="2004" name="EMBO Rep.">
        <title>Sgt1 is required for human kinetochore assembly.</title>
        <authorList>
            <person name="Steensgaard P."/>
            <person name="Garre M."/>
            <person name="Muradore I."/>
            <person name="Transidico P."/>
            <person name="Nigg E.A."/>
            <person name="Kitagawa K."/>
            <person name="Earnshaw W.C."/>
            <person name="Faretta M."/>
            <person name="Musacchio A."/>
        </authorList>
    </citation>
    <scope>SUBCELLULAR LOCATION</scope>
</reference>
<reference key="13">
    <citation type="journal article" date="2004" name="J. Biol. Chem.">
        <title>Identification of two novel components of the human NDC80 kinetochore complex.</title>
        <authorList>
            <person name="Bharadwaj R."/>
            <person name="Qi W."/>
            <person name="Yu H."/>
        </authorList>
    </citation>
    <scope>FUNCTION</scope>
    <scope>IDENTIFICATION BY MASS SPECTROMETRY</scope>
    <scope>IDENTIFICATION IN THE NDC80 COMPLEX</scope>
</reference>
<reference key="14">
    <citation type="journal article" date="2004" name="J. Biol. Chem.">
        <title>NEK2A interacts with MAD1 and possibly functions as a novel integrator of the spindle checkpoint signaling.</title>
        <authorList>
            <person name="Lou Y."/>
            <person name="Yao J."/>
            <person name="Zereshki A."/>
            <person name="Dou Z."/>
            <person name="Ahmed K."/>
            <person name="Wang H."/>
            <person name="Hu J."/>
            <person name="Wang Y."/>
            <person name="Yao X."/>
        </authorList>
    </citation>
    <scope>SUBCELLULAR LOCATION</scope>
</reference>
<reference key="15">
    <citation type="journal article" date="2004" name="Mol. Cell. Proteomics">
        <title>Identification of the substrates and interaction proteins of aurora kinases from a protein-protein interaction model.</title>
        <authorList>
            <person name="Tien A.-C."/>
            <person name="Lin M.-H."/>
            <person name="Su L.-J."/>
            <person name="Hong Y.-R."/>
            <person name="Cheng T.-S."/>
            <person name="Lee Y.-C.G."/>
            <person name="Lin W.-J."/>
            <person name="Still I.H."/>
            <person name="Huang C.-Y.F."/>
        </authorList>
    </citation>
    <scope>INTERACTION WITH AURKB AND CDCA1</scope>
    <scope>PHOSPHORYLATION BY AURKA AND AURKB</scope>
</reference>
<reference key="16">
    <citation type="journal article" date="2004" name="Nat. Cell Biol.">
        <title>A conserved Mis12 centromere complex is linked to heterochromatic HP1 and outer kinetochore protein Zwint-1.</title>
        <authorList>
            <person name="Obuse C."/>
            <person name="Iwasaki O."/>
            <person name="Kiyomitsu T."/>
            <person name="Goshima G."/>
            <person name="Toyoda Y."/>
            <person name="Yanagida M."/>
        </authorList>
    </citation>
    <scope>IDENTIFICATION BY MASS SPECTROMETRY</scope>
    <scope>IDENTIFICATION IN A COMPLEX WITH MIS12</scope>
</reference>
<reference key="17">
    <citation type="journal article" date="2005" name="Curr. Biol.">
        <title>Polo-like kinase 1 creates the tension-sensing 3F3/2 phosphoepitope and modulates the association of spindle-checkpoint proteins at kinetochores.</title>
        <authorList>
            <person name="Ahonen L.J."/>
            <person name="Kallio M.J."/>
            <person name="Daum J.R."/>
            <person name="Bolton M."/>
            <person name="Manke I.A."/>
            <person name="Yaffe M.B."/>
            <person name="Stukenberg P.T."/>
            <person name="Gorbsky G.J."/>
        </authorList>
    </citation>
    <scope>SUBCELLULAR LOCATION</scope>
</reference>
<reference key="18">
    <citation type="journal article" date="2005" name="J. Biol. Chem.">
        <title>Architecture of the human Ndc80-Hec1 complex, a critical constituent of the outer kinetochore.</title>
        <authorList>
            <person name="Ciferri C."/>
            <person name="De Luca J."/>
            <person name="Monzani S."/>
            <person name="Ferrari K.J."/>
            <person name="Ristic D."/>
            <person name="Wyman C."/>
            <person name="Stark H."/>
            <person name="Kilmartin J."/>
            <person name="Salmon E.D."/>
            <person name="Musacchio A."/>
        </authorList>
    </citation>
    <scope>CHARACTERIZATION OF THE NDC80 COMPLEX</scope>
    <scope>SUBCELLULAR LOCATION</scope>
</reference>
<reference key="19">
    <citation type="journal article" date="2005" name="J. Cell Biol.">
        <title>ZW10 links mitotic checkpoint signaling to the structural kinetochore.</title>
        <authorList>
            <person name="Kops G.J.P.L."/>
            <person name="Kim Y."/>
            <person name="Weaver B.A.A."/>
            <person name="Mao Y."/>
            <person name="McLeod I."/>
            <person name="Yates J.R. III"/>
            <person name="Tagaya M."/>
            <person name="Cleveland D.W."/>
        </authorList>
    </citation>
    <scope>IDENTIFICATION BY MASS SPECTROMETRY</scope>
    <scope>IDENTIFICATION IN A COMPLEX WITH ZWINT</scope>
</reference>
<reference key="20">
    <citation type="journal article" date="2005" name="Mol. Biol. Cell">
        <title>Hec1 and Nuf2 are core components of the kinetochore outer plate essential for organizing microtubule attachment sites.</title>
        <authorList>
            <person name="DeLuca J.G."/>
            <person name="Dong Y."/>
            <person name="Hergert P."/>
            <person name="Strauss J."/>
            <person name="Hickey J.M."/>
            <person name="Salmon E.D."/>
            <person name="McEwen B.F."/>
        </authorList>
    </citation>
    <scope>FUNCTION</scope>
    <scope>SUBCELLULAR LOCATION</scope>
</reference>
<reference key="21">
    <citation type="journal article" date="2005" name="Mol. Cell. Biol.">
        <title>The functional region of CENP-H interacts with the Nuf2 complex that localizes to centromere during mitosis.</title>
        <authorList>
            <person name="Mikami Y."/>
            <person name="Hori T."/>
            <person name="Kimura H."/>
            <person name="Fukagawa T."/>
        </authorList>
    </citation>
    <scope>INTERACTION WITH CENPH</scope>
</reference>
<reference key="22">
    <citation type="journal article" date="2006" name="Oncogene">
        <title>Hec1 sequentially recruits Zwint-1 and ZW10 to kinetochores for faithful chromosome segregation and spindle checkpoint control.</title>
        <authorList>
            <person name="Lin Y.-T."/>
            <person name="Chen Y."/>
            <person name="Wu G."/>
            <person name="Lee W.-H."/>
        </authorList>
    </citation>
    <scope>FUNCTION</scope>
    <scope>INTERACTION WITH ZWINT</scope>
    <scope>SUBCELLULAR LOCATION</scope>
    <scope>DEVELOPMENTAL STAGE</scope>
</reference>
<reference key="23">
    <citation type="journal article" date="2010" name="Sci. Signal.">
        <title>Quantitative phosphoproteomics reveals widespread full phosphorylation site occupancy during mitosis.</title>
        <authorList>
            <person name="Olsen J.V."/>
            <person name="Vermeulen M."/>
            <person name="Santamaria A."/>
            <person name="Kumar C."/>
            <person name="Miller M.L."/>
            <person name="Jensen L.J."/>
            <person name="Gnad F."/>
            <person name="Cox J."/>
            <person name="Jensen T.S."/>
            <person name="Nigg E.A."/>
            <person name="Brunak S."/>
            <person name="Mann M."/>
        </authorList>
    </citation>
    <scope>PHOSPHORYLATION [LARGE SCALE ANALYSIS] AT SER-69</scope>
    <scope>IDENTIFICATION BY MASS SPECTROMETRY [LARGE SCALE ANALYSIS]</scope>
    <source>
        <tissue>Cervix carcinoma</tissue>
    </source>
</reference>
<reference key="24">
    <citation type="journal article" date="2011" name="BMC Syst. Biol.">
        <title>Initial characterization of the human central proteome.</title>
        <authorList>
            <person name="Burkard T.R."/>
            <person name="Planyavsky M."/>
            <person name="Kaupe I."/>
            <person name="Breitwieser F.P."/>
            <person name="Buerckstuemmer T."/>
            <person name="Bennett K.L."/>
            <person name="Superti-Furga G."/>
            <person name="Colinge J."/>
        </authorList>
    </citation>
    <scope>IDENTIFICATION BY MASS SPECTROMETRY [LARGE SCALE ANALYSIS]</scope>
</reference>
<reference key="25">
    <citation type="journal article" date="2012" name="Dev. Cell">
        <title>The kinetochore-bound Ska1 complex tracks depolymerizing microtubules and binds to curved protofilaments.</title>
        <authorList>
            <person name="Schmidt J.C."/>
            <person name="Arthanari H."/>
            <person name="Boeszoermenyi A."/>
            <person name="Dashkevich N.M."/>
            <person name="Wilson-Kubalek E.M."/>
            <person name="Monnier N."/>
            <person name="Markus M."/>
            <person name="Oberer M."/>
            <person name="Milligan R.A."/>
            <person name="Bathe M."/>
            <person name="Wagner G."/>
            <person name="Grishchuk E.L."/>
            <person name="Cheeseman I.M."/>
        </authorList>
    </citation>
    <scope>FUNCTION</scope>
</reference>
<reference key="26">
    <citation type="journal article" date="2012" name="Nat. Cell Biol.">
        <title>Recruitment of the human Cdt1 replication licensing protein by the loop domain of Hec1 is required for stable kinetochore-microtubule attachment.</title>
        <authorList>
            <person name="Varma D."/>
            <person name="Chandrasekaran S."/>
            <person name="Sundin L.J."/>
            <person name="Reidy K.T."/>
            <person name="Wan X."/>
            <person name="Chasse D.A."/>
            <person name="Nevis K.R."/>
            <person name="DeLuca J.G."/>
            <person name="Salmon E.D."/>
            <person name="Cook J.G."/>
        </authorList>
    </citation>
    <scope>INTERACTION WITH CDT1</scope>
</reference>
<reference key="27">
    <citation type="journal article" date="2013" name="Curr. Biol.">
        <title>Lateral to end-on conversion of chromosome-microtubule attachment requires kinesins CENP-E and MCAK.</title>
        <authorList>
            <person name="Shrestha R.L."/>
            <person name="Draviam V.M."/>
        </authorList>
    </citation>
    <scope>FUNCTION</scope>
</reference>
<reference key="28">
    <citation type="journal article" date="2013" name="Curr. Biol.">
        <authorList>
            <person name="Shrestha R.L."/>
            <person name="Draviam V.M."/>
        </authorList>
    </citation>
    <scope>ERRATUM OF PUBMED:23891108</scope>
</reference>
<reference key="29">
    <citation type="journal article" date="2013" name="J. Proteome Res.">
        <title>Toward a comprehensive characterization of a human cancer cell phosphoproteome.</title>
        <authorList>
            <person name="Zhou H."/>
            <person name="Di Palma S."/>
            <person name="Preisinger C."/>
            <person name="Peng M."/>
            <person name="Polat A.N."/>
            <person name="Heck A.J."/>
            <person name="Mohammed S."/>
        </authorList>
    </citation>
    <scope>PHOSPHORYLATION [LARGE SCALE ANALYSIS] AT SER-44 AND SER-69</scope>
    <scope>IDENTIFICATION BY MASS SPECTROMETRY [LARGE SCALE ANALYSIS]</scope>
    <source>
        <tissue>Cervix carcinoma</tissue>
        <tissue>Erythroleukemia</tissue>
    </source>
</reference>
<reference key="30">
    <citation type="journal article" date="2015" name="Nat. Commun.">
        <title>Chromokinesin Kid and kinetochore kinesin CENP-E differentially support chromosome congression without end-on attachment to microtubules.</title>
        <authorList>
            <person name="Iemura K."/>
            <person name="Tanaka K."/>
        </authorList>
    </citation>
    <scope>FUNCTION</scope>
</reference>
<reference key="31">
    <citation type="journal article" date="2016" name="Cell">
        <title>A TOG protein confers tension sensitivity to kinetochore-microtubule attachments.</title>
        <authorList>
            <person name="Miller M.P."/>
            <person name="Asbury C.L."/>
            <person name="Biggins S."/>
        </authorList>
    </citation>
    <scope>INTERACTION WITH CKAP5</scope>
</reference>
<reference key="32">
    <citation type="journal article" date="2019" name="J. Biol. Chem.">
        <title>Dynamic acetylation of the kinetochore-associated protein HEC1 ensures accurate microtubule-kinetochore attachment.</title>
        <authorList>
            <person name="Zhao G."/>
            <person name="Cheng Y."/>
            <person name="Gui P."/>
            <person name="Cui M."/>
            <person name="Liu W."/>
            <person name="Wang W."/>
            <person name="Wang X."/>
            <person name="Ali M."/>
            <person name="Dou Z."/>
            <person name="Niu L."/>
            <person name="Liu H."/>
            <person name="Anderson L."/>
            <person name="Ruan K."/>
            <person name="Hong J."/>
            <person name="Yao X."/>
        </authorList>
    </citation>
    <scope>FUNCTION</scope>
    <scope>PHOSPHORYLATION AT SER-55 AND SER-62</scope>
    <scope>ACETYLATION AT LYS-53; LYS-59 AND LYS-527</scope>
    <scope>MUTAGENESIS OF LYS-53 AND LYS-59</scope>
</reference>
<proteinExistence type="evidence at protein level"/>
<name>NDC80_HUMAN</name>
<organism>
    <name type="scientific">Homo sapiens</name>
    <name type="common">Human</name>
    <dbReference type="NCBI Taxonomy" id="9606"/>
    <lineage>
        <taxon>Eukaryota</taxon>
        <taxon>Metazoa</taxon>
        <taxon>Chordata</taxon>
        <taxon>Craniata</taxon>
        <taxon>Vertebrata</taxon>
        <taxon>Euteleostomi</taxon>
        <taxon>Mammalia</taxon>
        <taxon>Eutheria</taxon>
        <taxon>Euarchontoglires</taxon>
        <taxon>Primates</taxon>
        <taxon>Haplorrhini</taxon>
        <taxon>Catarrhini</taxon>
        <taxon>Hominidae</taxon>
        <taxon>Homo</taxon>
    </lineage>
</organism>
<feature type="chain" id="PRO_0000249550" description="Kinetochore protein NDC80 homolog">
    <location>
        <begin position="1"/>
        <end position="642"/>
    </location>
</feature>
<feature type="region of interest" description="Interaction with the N-terminus of CDCA1">
    <location>
        <begin position="1"/>
        <end position="445"/>
    </location>
</feature>
<feature type="region of interest" description="Nuclear localization">
    <location>
        <begin position="1"/>
        <end position="250"/>
    </location>
</feature>
<feature type="region of interest" description="Disordered" evidence="3">
    <location>
        <begin position="1"/>
        <end position="74"/>
    </location>
</feature>
<feature type="region of interest" description="Interaction with RB1">
    <location>
        <begin position="128"/>
        <end position="251"/>
    </location>
</feature>
<feature type="region of interest" description="Interaction with NEK2 and ZWINT" evidence="18">
    <location>
        <begin position="251"/>
        <end position="618"/>
    </location>
</feature>
<feature type="region of interest" description="Interaction with SMC1A">
    <location>
        <begin position="251"/>
        <end position="431"/>
    </location>
</feature>
<feature type="region of interest" description="Interaction with PSMC2 and SMC1A">
    <location>
        <begin position="361"/>
        <end position="547"/>
    </location>
</feature>
<feature type="region of interest" description="Interaction with the C-terminus of CDCA1 and the SPBC24-SPBC25 subcomplex">
    <location>
        <begin position="446"/>
        <end position="642"/>
    </location>
</feature>
<feature type="coiled-coil region" evidence="2">
    <location>
        <begin position="261"/>
        <end position="403"/>
    </location>
</feature>
<feature type="coiled-coil region" evidence="2">
    <location>
        <begin position="458"/>
        <end position="642"/>
    </location>
</feature>
<feature type="compositionally biased region" description="Polar residues" evidence="3">
    <location>
        <begin position="18"/>
        <end position="33"/>
    </location>
</feature>
<feature type="compositionally biased region" description="Polar residues" evidence="3">
    <location>
        <begin position="63"/>
        <end position="74"/>
    </location>
</feature>
<feature type="modified residue" description="Phosphoserine" evidence="29">
    <location>
        <position position="44"/>
    </location>
</feature>
<feature type="modified residue" description="N6-acetyllysine" evidence="24">
    <location>
        <position position="53"/>
    </location>
</feature>
<feature type="modified residue" description="Phosphoserine" evidence="24">
    <location>
        <position position="55"/>
    </location>
</feature>
<feature type="modified residue" description="N6-acetyllysine" evidence="24">
    <location>
        <position position="59"/>
    </location>
</feature>
<feature type="modified residue" description="Phosphoserine" evidence="24">
    <location>
        <position position="62"/>
    </location>
</feature>
<feature type="modified residue" description="Phosphoserine" evidence="28 29">
    <location>
        <position position="69"/>
    </location>
</feature>
<feature type="modified residue" description="Phosphoserine; by NEK2" evidence="7">
    <location>
        <position position="165"/>
    </location>
</feature>
<feature type="modified residue" description="Phosphoserine" evidence="1">
    <location>
        <position position="242"/>
    </location>
</feature>
<feature type="modified residue" description="N6-acetyllysine" evidence="24">
    <location>
        <position position="527"/>
    </location>
</feature>
<feature type="sequence variant" id="VAR_027436" description="In dbSNP:rs16943490.">
    <original>S</original>
    <variation>A</variation>
    <location>
        <position position="66"/>
    </location>
</feature>
<feature type="sequence variant" id="VAR_027437" description="In dbSNP:rs12456560.">
    <original>E</original>
    <variation>D</variation>
    <location>
        <position position="348"/>
    </location>
</feature>
<feature type="sequence variant" id="VAR_027438" description="In dbSNP:rs9051.">
    <original>A</original>
    <variation>P</variation>
    <location>
        <position position="605"/>
    </location>
</feature>
<feature type="mutagenesis site" description="Mimics acetylation, leading to increased kinetochore-microtubule attachment; when associated with Q-59." evidence="24">
    <original>K</original>
    <variation>Q</variation>
    <location>
        <position position="53"/>
    </location>
</feature>
<feature type="mutagenesis site" description="Impaired acetylation, leading to reduced kinetochore-microtubule attachment; when associated with R-59." evidence="24">
    <original>K</original>
    <variation>R</variation>
    <location>
        <position position="53"/>
    </location>
</feature>
<feature type="mutagenesis site" description="Mimics acetylation, leading to increased kinetochore-microtubule attachment; when associated with Q-53." evidence="24">
    <original>K</original>
    <variation>Q</variation>
    <location>
        <position position="59"/>
    </location>
</feature>
<feature type="mutagenesis site" description="Impaired acetylation, leading to reduced kinetochore-microtubule attachment; when associated with R-53." evidence="24">
    <original>K</original>
    <variation>R</variation>
    <location>
        <position position="59"/>
    </location>
</feature>
<feature type="mutagenesis site" description="Abrogates binding to RB1." evidence="5">
    <original>E</original>
    <variation>K</variation>
    <location>
        <position position="234"/>
    </location>
</feature>
<feature type="helix" evidence="30">
    <location>
        <begin position="89"/>
        <end position="105"/>
    </location>
</feature>
<feature type="turn" evidence="30">
    <location>
        <begin position="114"/>
        <end position="117"/>
    </location>
</feature>
<feature type="helix" evidence="30">
    <location>
        <begin position="122"/>
        <end position="133"/>
    </location>
</feature>
<feature type="turn" evidence="30">
    <location>
        <begin position="134"/>
        <end position="136"/>
    </location>
</feature>
<feature type="helix" evidence="30">
    <location>
        <begin position="147"/>
        <end position="157"/>
    </location>
</feature>
<feature type="helix" evidence="30">
    <location>
        <begin position="166"/>
        <end position="170"/>
    </location>
</feature>
<feature type="turn" evidence="30">
    <location>
        <begin position="171"/>
        <end position="173"/>
    </location>
</feature>
<feature type="turn" evidence="30">
    <location>
        <begin position="175"/>
        <end position="177"/>
    </location>
</feature>
<feature type="helix" evidence="30">
    <location>
        <begin position="178"/>
        <end position="194"/>
    </location>
</feature>
<feature type="helix" evidence="31">
    <location>
        <begin position="222"/>
        <end position="238"/>
    </location>
</feature>
<feature type="helix" evidence="31">
    <location>
        <begin position="244"/>
        <end position="258"/>
    </location>
</feature>
<feature type="helix" evidence="31">
    <location>
        <begin position="264"/>
        <end position="286"/>
    </location>
</feature>
<feature type="helix" evidence="32">
    <location>
        <begin position="371"/>
        <end position="421"/>
    </location>
</feature>
<feature type="helix" evidence="32">
    <location>
        <begin position="451"/>
        <end position="453"/>
    </location>
</feature>
<feature type="helix" evidence="32">
    <location>
        <begin position="454"/>
        <end position="509"/>
    </location>
</feature>
<accession>O14777</accession>
<accession>Q6PJX2</accession>
<evidence type="ECO:0000250" key="1">
    <source>
        <dbReference type="UniProtKB" id="Q9D0F1"/>
    </source>
</evidence>
<evidence type="ECO:0000255" key="2"/>
<evidence type="ECO:0000256" key="3">
    <source>
        <dbReference type="SAM" id="MobiDB-lite"/>
    </source>
</evidence>
<evidence type="ECO:0000269" key="4">
    <source>
    </source>
</evidence>
<evidence type="ECO:0000269" key="5">
    <source>
    </source>
</evidence>
<evidence type="ECO:0000269" key="6">
    <source>
    </source>
</evidence>
<evidence type="ECO:0000269" key="7">
    <source>
    </source>
</evidence>
<evidence type="ECO:0000269" key="8">
    <source>
    </source>
</evidence>
<evidence type="ECO:0000269" key="9">
    <source>
    </source>
</evidence>
<evidence type="ECO:0000269" key="10">
    <source>
    </source>
</evidence>
<evidence type="ECO:0000269" key="11">
    <source>
    </source>
</evidence>
<evidence type="ECO:0000269" key="12">
    <source>
    </source>
</evidence>
<evidence type="ECO:0000269" key="13">
    <source>
    </source>
</evidence>
<evidence type="ECO:0000269" key="14">
    <source>
    </source>
</evidence>
<evidence type="ECO:0000269" key="15">
    <source>
    </source>
</evidence>
<evidence type="ECO:0000269" key="16">
    <source>
    </source>
</evidence>
<evidence type="ECO:0000269" key="17">
    <source>
    </source>
</evidence>
<evidence type="ECO:0000269" key="18">
    <source>
    </source>
</evidence>
<evidence type="ECO:0000269" key="19">
    <source>
    </source>
</evidence>
<evidence type="ECO:0000269" key="20">
    <source>
    </source>
</evidence>
<evidence type="ECO:0000269" key="21">
    <source>
    </source>
</evidence>
<evidence type="ECO:0000269" key="22">
    <source>
    </source>
</evidence>
<evidence type="ECO:0000269" key="23">
    <source>
    </source>
</evidence>
<evidence type="ECO:0000269" key="24">
    <source>
    </source>
</evidence>
<evidence type="ECO:0000269" key="25">
    <source>
    </source>
</evidence>
<evidence type="ECO:0000269" key="26">
    <source>
    </source>
</evidence>
<evidence type="ECO:0000305" key="27"/>
<evidence type="ECO:0007744" key="28">
    <source>
    </source>
</evidence>
<evidence type="ECO:0007744" key="29">
    <source>
    </source>
</evidence>
<evidence type="ECO:0007829" key="30">
    <source>
        <dbReference type="PDB" id="2IGP"/>
    </source>
</evidence>
<evidence type="ECO:0007829" key="31">
    <source>
        <dbReference type="PDB" id="2VE7"/>
    </source>
</evidence>
<evidence type="ECO:0007829" key="32">
    <source>
        <dbReference type="PDB" id="8G0P"/>
    </source>
</evidence>